<reference key="1">
    <citation type="journal article" date="2006" name="BMC Evol. Biol.">
        <title>Complete plastid genome sequences of Drimys, Liriodendron, and Piper: implications for the phylogenetic relationships of magnoliids.</title>
        <authorList>
            <person name="Cai Z."/>
            <person name="Penaflor C."/>
            <person name="Kuehl J.V."/>
            <person name="Leebens-Mack J."/>
            <person name="Carlson J.E."/>
            <person name="dePamphilis C.W."/>
            <person name="Boore J.L."/>
            <person name="Jansen R.K."/>
        </authorList>
    </citation>
    <scope>NUCLEOTIDE SEQUENCE [LARGE SCALE GENOMIC DNA]</scope>
</reference>
<sequence>MMLEHVLFLSAYLFSIGIFGLITSRNMVRALMCLELILNAVNLNLVTFSHLFDSRQLKGDIFSIFVITIAAAEAAIGLAIVSSIHRNRKSTRINQSNLLNK</sequence>
<keyword id="KW-0150">Chloroplast</keyword>
<keyword id="KW-0472">Membrane</keyword>
<keyword id="KW-0520">NAD</keyword>
<keyword id="KW-0521">NADP</keyword>
<keyword id="KW-0934">Plastid</keyword>
<keyword id="KW-0618">Plastoquinone</keyword>
<keyword id="KW-0874">Quinone</keyword>
<keyword id="KW-0793">Thylakoid</keyword>
<keyword id="KW-1278">Translocase</keyword>
<keyword id="KW-0812">Transmembrane</keyword>
<keyword id="KW-1133">Transmembrane helix</keyword>
<keyword id="KW-0813">Transport</keyword>
<feature type="chain" id="PRO_0000360361" description="NAD(P)H-quinone oxidoreductase subunit 4L, chloroplastic">
    <location>
        <begin position="1"/>
        <end position="101"/>
    </location>
</feature>
<feature type="transmembrane region" description="Helical" evidence="1">
    <location>
        <begin position="2"/>
        <end position="22"/>
    </location>
</feature>
<feature type="transmembrane region" description="Helical" evidence="1">
    <location>
        <begin position="32"/>
        <end position="52"/>
    </location>
</feature>
<feature type="transmembrane region" description="Helical" evidence="1">
    <location>
        <begin position="61"/>
        <end position="81"/>
    </location>
</feature>
<organism>
    <name type="scientific">Piper cenocladum</name>
    <name type="common">Ant piper</name>
    <dbReference type="NCBI Taxonomy" id="398741"/>
    <lineage>
        <taxon>Eukaryota</taxon>
        <taxon>Viridiplantae</taxon>
        <taxon>Streptophyta</taxon>
        <taxon>Embryophyta</taxon>
        <taxon>Tracheophyta</taxon>
        <taxon>Spermatophyta</taxon>
        <taxon>Magnoliopsida</taxon>
        <taxon>Magnoliidae</taxon>
        <taxon>Piperales</taxon>
        <taxon>Piperaceae</taxon>
        <taxon>Piper</taxon>
    </lineage>
</organism>
<evidence type="ECO:0000255" key="1">
    <source>
        <dbReference type="HAMAP-Rule" id="MF_01456"/>
    </source>
</evidence>
<accession>Q06GK7</accession>
<gene>
    <name evidence="1" type="primary">ndhE</name>
</gene>
<proteinExistence type="inferred from homology"/>
<protein>
    <recommendedName>
        <fullName evidence="1">NAD(P)H-quinone oxidoreductase subunit 4L, chloroplastic</fullName>
        <ecNumber evidence="1">7.1.1.-</ecNumber>
    </recommendedName>
    <alternativeName>
        <fullName evidence="1">NAD(P)H dehydrogenase subunit 4L</fullName>
    </alternativeName>
    <alternativeName>
        <fullName evidence="1">NADH-plastoquinone oxidoreductase subunit 4L</fullName>
    </alternativeName>
</protein>
<dbReference type="EC" id="7.1.1.-" evidence="1"/>
<dbReference type="EMBL" id="DQ887677">
    <property type="protein sequence ID" value="ABI14524.1"/>
    <property type="molecule type" value="Genomic_DNA"/>
</dbReference>
<dbReference type="RefSeq" id="YP_784526.1">
    <property type="nucleotide sequence ID" value="NC_008457.1"/>
</dbReference>
<dbReference type="SMR" id="Q06GK7"/>
<dbReference type="GeneID" id="4363703"/>
<dbReference type="GO" id="GO:0009535">
    <property type="term" value="C:chloroplast thylakoid membrane"/>
    <property type="evidence" value="ECO:0007669"/>
    <property type="project" value="UniProtKB-SubCell"/>
</dbReference>
<dbReference type="GO" id="GO:0030964">
    <property type="term" value="C:NADH dehydrogenase complex"/>
    <property type="evidence" value="ECO:0007669"/>
    <property type="project" value="TreeGrafter"/>
</dbReference>
<dbReference type="GO" id="GO:0016655">
    <property type="term" value="F:oxidoreductase activity, acting on NAD(P)H, quinone or similar compound as acceptor"/>
    <property type="evidence" value="ECO:0007669"/>
    <property type="project" value="UniProtKB-UniRule"/>
</dbReference>
<dbReference type="GO" id="GO:0048038">
    <property type="term" value="F:quinone binding"/>
    <property type="evidence" value="ECO:0007669"/>
    <property type="project" value="UniProtKB-KW"/>
</dbReference>
<dbReference type="GO" id="GO:0042773">
    <property type="term" value="P:ATP synthesis coupled electron transport"/>
    <property type="evidence" value="ECO:0007669"/>
    <property type="project" value="InterPro"/>
</dbReference>
<dbReference type="GO" id="GO:0019684">
    <property type="term" value="P:photosynthesis, light reaction"/>
    <property type="evidence" value="ECO:0007669"/>
    <property type="project" value="UniProtKB-UniRule"/>
</dbReference>
<dbReference type="FunFam" id="1.10.287.3510:FF:000001">
    <property type="entry name" value="NADH-quinone oxidoreductase subunit K"/>
    <property type="match status" value="1"/>
</dbReference>
<dbReference type="Gene3D" id="1.10.287.3510">
    <property type="match status" value="1"/>
</dbReference>
<dbReference type="HAMAP" id="MF_01456">
    <property type="entry name" value="NDH1_NuoK"/>
    <property type="match status" value="1"/>
</dbReference>
<dbReference type="InterPro" id="IPR001133">
    <property type="entry name" value="NADH_UbQ_OxRdtase_chain4L/K"/>
</dbReference>
<dbReference type="InterPro" id="IPR039428">
    <property type="entry name" value="NUOK/Mnh_C1-like"/>
</dbReference>
<dbReference type="NCBIfam" id="NF004320">
    <property type="entry name" value="PRK05715.1-2"/>
    <property type="match status" value="1"/>
</dbReference>
<dbReference type="NCBIfam" id="NF004322">
    <property type="entry name" value="PRK05715.1-4"/>
    <property type="match status" value="1"/>
</dbReference>
<dbReference type="NCBIfam" id="NF004323">
    <property type="entry name" value="PRK05715.1-5"/>
    <property type="match status" value="1"/>
</dbReference>
<dbReference type="PANTHER" id="PTHR11434:SF16">
    <property type="entry name" value="NADH-UBIQUINONE OXIDOREDUCTASE CHAIN 4L"/>
    <property type="match status" value="1"/>
</dbReference>
<dbReference type="PANTHER" id="PTHR11434">
    <property type="entry name" value="NADH-UBIQUINONE OXIDOREDUCTASE SUBUNIT ND4L"/>
    <property type="match status" value="1"/>
</dbReference>
<dbReference type="Pfam" id="PF00420">
    <property type="entry name" value="Oxidored_q2"/>
    <property type="match status" value="1"/>
</dbReference>
<comment type="function">
    <text evidence="1">NDH shuttles electrons from NAD(P)H:plastoquinone, via FMN and iron-sulfur (Fe-S) centers, to quinones in the photosynthetic chain and possibly in a chloroplast respiratory chain. The immediate electron acceptor for the enzyme in this species is believed to be plastoquinone. Couples the redox reaction to proton translocation, and thus conserves the redox energy in a proton gradient.</text>
</comment>
<comment type="catalytic activity">
    <reaction evidence="1">
        <text>a plastoquinone + NADH + (n+1) H(+)(in) = a plastoquinol + NAD(+) + n H(+)(out)</text>
        <dbReference type="Rhea" id="RHEA:42608"/>
        <dbReference type="Rhea" id="RHEA-COMP:9561"/>
        <dbReference type="Rhea" id="RHEA-COMP:9562"/>
        <dbReference type="ChEBI" id="CHEBI:15378"/>
        <dbReference type="ChEBI" id="CHEBI:17757"/>
        <dbReference type="ChEBI" id="CHEBI:57540"/>
        <dbReference type="ChEBI" id="CHEBI:57945"/>
        <dbReference type="ChEBI" id="CHEBI:62192"/>
    </reaction>
</comment>
<comment type="catalytic activity">
    <reaction evidence="1">
        <text>a plastoquinone + NADPH + (n+1) H(+)(in) = a plastoquinol + NADP(+) + n H(+)(out)</text>
        <dbReference type="Rhea" id="RHEA:42612"/>
        <dbReference type="Rhea" id="RHEA-COMP:9561"/>
        <dbReference type="Rhea" id="RHEA-COMP:9562"/>
        <dbReference type="ChEBI" id="CHEBI:15378"/>
        <dbReference type="ChEBI" id="CHEBI:17757"/>
        <dbReference type="ChEBI" id="CHEBI:57783"/>
        <dbReference type="ChEBI" id="CHEBI:58349"/>
        <dbReference type="ChEBI" id="CHEBI:62192"/>
    </reaction>
</comment>
<comment type="subunit">
    <text evidence="1">NDH is composed of at least 16 different subunits, 5 of which are encoded in the nucleus.</text>
</comment>
<comment type="subcellular location">
    <subcellularLocation>
        <location evidence="1">Plastid</location>
        <location evidence="1">Chloroplast thylakoid membrane</location>
        <topology evidence="1">Multi-pass membrane protein</topology>
    </subcellularLocation>
</comment>
<comment type="similarity">
    <text evidence="1">Belongs to the complex I subunit 4L family.</text>
</comment>
<name>NU4LC_PIPCE</name>
<geneLocation type="chloroplast"/>